<comment type="similarity">
    <text evidence="1">Belongs to the universal ribosomal protein uS9 family.</text>
</comment>
<comment type="sequence caution" evidence="3">
    <conflict type="erroneous initiation">
        <sequence resource="EMBL-CDS" id="AAL62943"/>
    </conflict>
    <text>Truncated N-terminus.</text>
</comment>
<organism>
    <name type="scientific">Pyrobaculum aerophilum (strain ATCC 51768 / DSM 7523 / JCM 9630 / CIP 104966 / NBRC 100827 / IM2)</name>
    <dbReference type="NCBI Taxonomy" id="178306"/>
    <lineage>
        <taxon>Archaea</taxon>
        <taxon>Thermoproteota</taxon>
        <taxon>Thermoprotei</taxon>
        <taxon>Thermoproteales</taxon>
        <taxon>Thermoproteaceae</taxon>
        <taxon>Pyrobaculum</taxon>
    </lineage>
</organism>
<name>RS9_PYRAE</name>
<gene>
    <name evidence="1" type="primary">rps9</name>
    <name type="ordered locus">PAE0674</name>
</gene>
<reference key="1">
    <citation type="journal article" date="2002" name="Proc. Natl. Acad. Sci. U.S.A.">
        <title>Genome sequence of the hyperthermophilic crenarchaeon Pyrobaculum aerophilum.</title>
        <authorList>
            <person name="Fitz-Gibbon S.T."/>
            <person name="Ladner H."/>
            <person name="Kim U.-J."/>
            <person name="Stetter K.O."/>
            <person name="Simon M.I."/>
            <person name="Miller J.H."/>
        </authorList>
    </citation>
    <scope>NUCLEOTIDE SEQUENCE [LARGE SCALE GENOMIC DNA]</scope>
    <source>
        <strain>ATCC 51768 / DSM 7523 / JCM 9630 / CIP 104966 / NBRC 100827 / IM2</strain>
    </source>
</reference>
<feature type="chain" id="PRO_0000111470" description="Small ribosomal subunit protein uS9">
    <location>
        <begin position="1"/>
        <end position="142"/>
    </location>
</feature>
<feature type="region of interest" description="Disordered" evidence="2">
    <location>
        <begin position="117"/>
        <end position="142"/>
    </location>
</feature>
<feature type="compositionally biased region" description="Basic residues" evidence="2">
    <location>
        <begin position="123"/>
        <end position="142"/>
    </location>
</feature>
<sequence>MPSAEVLQETPRVVISVGKKKTAVARAIIKPGIGRVRINGYPLELWPIEMARIKMSEPLILAGELAKKVDIDVNVSGGGYMGQAVAVRIAMARGLVAFFQSQELKELYERYDPYMLKGDPRRTEHKKPGIKHARSKRQKAYR</sequence>
<keyword id="KW-1185">Reference proteome</keyword>
<keyword id="KW-0687">Ribonucleoprotein</keyword>
<keyword id="KW-0689">Ribosomal protein</keyword>
<proteinExistence type="inferred from homology"/>
<protein>
    <recommendedName>
        <fullName evidence="1">Small ribosomal subunit protein uS9</fullName>
    </recommendedName>
    <alternativeName>
        <fullName evidence="3">30S ribosomal protein S9</fullName>
    </alternativeName>
</protein>
<dbReference type="EMBL" id="AE009441">
    <property type="protein sequence ID" value="AAL62943.1"/>
    <property type="status" value="ALT_INIT"/>
    <property type="molecule type" value="Genomic_DNA"/>
</dbReference>
<dbReference type="SMR" id="Q8ZYQ0"/>
<dbReference type="FunCoup" id="Q8ZYQ0">
    <property type="interactions" value="127"/>
</dbReference>
<dbReference type="STRING" id="178306.PAE0674"/>
<dbReference type="EnsemblBacteria" id="AAL62943">
    <property type="protein sequence ID" value="AAL62943"/>
    <property type="gene ID" value="PAE0674"/>
</dbReference>
<dbReference type="KEGG" id="pai:PAE0674"/>
<dbReference type="PATRIC" id="fig|178306.9.peg.488"/>
<dbReference type="eggNOG" id="arCOG04243">
    <property type="taxonomic scope" value="Archaea"/>
</dbReference>
<dbReference type="HOGENOM" id="CLU_046483_4_0_2"/>
<dbReference type="InParanoid" id="Q8ZYQ0"/>
<dbReference type="Proteomes" id="UP000002439">
    <property type="component" value="Chromosome"/>
</dbReference>
<dbReference type="GO" id="GO:0022627">
    <property type="term" value="C:cytosolic small ribosomal subunit"/>
    <property type="evidence" value="ECO:0000318"/>
    <property type="project" value="GO_Central"/>
</dbReference>
<dbReference type="GO" id="GO:0003723">
    <property type="term" value="F:RNA binding"/>
    <property type="evidence" value="ECO:0000318"/>
    <property type="project" value="GO_Central"/>
</dbReference>
<dbReference type="GO" id="GO:0003735">
    <property type="term" value="F:structural constituent of ribosome"/>
    <property type="evidence" value="ECO:0000318"/>
    <property type="project" value="GO_Central"/>
</dbReference>
<dbReference type="GO" id="GO:0000462">
    <property type="term" value="P:maturation of SSU-rRNA from tricistronic rRNA transcript (SSU-rRNA, 5.8S rRNA, LSU-rRNA)"/>
    <property type="evidence" value="ECO:0000318"/>
    <property type="project" value="GO_Central"/>
</dbReference>
<dbReference type="GO" id="GO:0006412">
    <property type="term" value="P:translation"/>
    <property type="evidence" value="ECO:0007669"/>
    <property type="project" value="UniProtKB-UniRule"/>
</dbReference>
<dbReference type="FunFam" id="3.30.230.10:FF:000051">
    <property type="entry name" value="30S ribosomal protein S9"/>
    <property type="match status" value="1"/>
</dbReference>
<dbReference type="Gene3D" id="3.30.230.10">
    <property type="match status" value="1"/>
</dbReference>
<dbReference type="HAMAP" id="MF_00532_A">
    <property type="entry name" value="Ribosomal_uS9_A"/>
    <property type="match status" value="1"/>
</dbReference>
<dbReference type="InterPro" id="IPR020568">
    <property type="entry name" value="Ribosomal_Su5_D2-typ_SF"/>
</dbReference>
<dbReference type="InterPro" id="IPR000754">
    <property type="entry name" value="Ribosomal_uS9"/>
</dbReference>
<dbReference type="InterPro" id="IPR019958">
    <property type="entry name" value="Ribosomal_uS9_archaeal"/>
</dbReference>
<dbReference type="InterPro" id="IPR020574">
    <property type="entry name" value="Ribosomal_uS9_CS"/>
</dbReference>
<dbReference type="InterPro" id="IPR014721">
    <property type="entry name" value="Ribsml_uS5_D2-typ_fold_subgr"/>
</dbReference>
<dbReference type="NCBIfam" id="NF001749">
    <property type="entry name" value="PRK00474.1"/>
    <property type="match status" value="1"/>
</dbReference>
<dbReference type="NCBIfam" id="TIGR03627">
    <property type="entry name" value="uS9_arch"/>
    <property type="match status" value="1"/>
</dbReference>
<dbReference type="PANTHER" id="PTHR21569:SF16">
    <property type="entry name" value="RIBOSOMAL PROTEIN S16"/>
    <property type="match status" value="1"/>
</dbReference>
<dbReference type="PANTHER" id="PTHR21569">
    <property type="entry name" value="RIBOSOMAL PROTEIN S9"/>
    <property type="match status" value="1"/>
</dbReference>
<dbReference type="Pfam" id="PF00380">
    <property type="entry name" value="Ribosomal_S9"/>
    <property type="match status" value="1"/>
</dbReference>
<dbReference type="SUPFAM" id="SSF54211">
    <property type="entry name" value="Ribosomal protein S5 domain 2-like"/>
    <property type="match status" value="1"/>
</dbReference>
<dbReference type="PROSITE" id="PS00360">
    <property type="entry name" value="RIBOSOMAL_S9"/>
    <property type="match status" value="1"/>
</dbReference>
<accession>Q8ZYQ0</accession>
<evidence type="ECO:0000255" key="1">
    <source>
        <dbReference type="HAMAP-Rule" id="MF_00532"/>
    </source>
</evidence>
<evidence type="ECO:0000256" key="2">
    <source>
        <dbReference type="SAM" id="MobiDB-lite"/>
    </source>
</evidence>
<evidence type="ECO:0000305" key="3"/>